<name>REPA_ORYSJ</name>
<feature type="signal peptide" evidence="4">
    <location>
        <begin position="1"/>
        <end position="24"/>
    </location>
</feature>
<feature type="propeptide" id="PRO_0000455738" description="Activation peptide" evidence="3">
    <location>
        <begin position="25"/>
        <end position="141"/>
    </location>
</feature>
<feature type="chain" id="PRO_5013421037" description="Cysteine endopeptidase RepA">
    <location>
        <begin position="142"/>
        <end position="378"/>
    </location>
</feature>
<feature type="active site" evidence="5">
    <location>
        <position position="167"/>
    </location>
</feature>
<feature type="active site" evidence="6">
    <location>
        <position position="303"/>
    </location>
</feature>
<feature type="active site" evidence="7">
    <location>
        <position position="324"/>
    </location>
</feature>
<feature type="disulfide bond" evidence="1">
    <location>
        <begin position="164"/>
        <end position="206"/>
    </location>
</feature>
<feature type="disulfide bond" evidence="2">
    <location>
        <begin position="198"/>
        <end position="239"/>
    </location>
</feature>
<feature type="disulfide bond" evidence="2">
    <location>
        <begin position="297"/>
        <end position="350"/>
    </location>
</feature>
<protein>
    <recommendedName>
        <fullName evidence="9">Cysteine endopeptidase RepA</fullName>
        <ecNumber evidence="3">3.4.22.-</ecNumber>
    </recommendedName>
</protein>
<accession>Q7GDU7</accession>
<accession>A3CA98</accession>
<accession>Q53LC6</accession>
<reference key="1">
    <citation type="journal article" date="1999" name="Plant Cell Physiol.">
        <title>The structure and organization of two cysteine endopeptidase genes from rice.</title>
        <authorList>
            <person name="Kato H."/>
            <person name="Shintani A."/>
            <person name="Minamikawa T."/>
        </authorList>
    </citation>
    <scope>NUCLEOTIDE SEQUENCE [GENOMIC DNA]</scope>
</reference>
<reference key="2">
    <citation type="journal article" date="2005" name="BMC Biol.">
        <title>The sequence of rice chromosomes 11 and 12, rich in disease resistance genes and recent gene duplications.</title>
        <authorList>
            <consortium name="The rice chromosomes 11 and 12 sequencing consortia"/>
        </authorList>
    </citation>
    <scope>NUCLEOTIDE SEQUENCE [LARGE SCALE GENOMIC DNA]</scope>
    <source>
        <strain>cv. Nipponbare</strain>
    </source>
</reference>
<reference key="3">
    <citation type="journal article" date="2005" name="Nature">
        <title>The map-based sequence of the rice genome.</title>
        <authorList>
            <consortium name="International rice genome sequencing project (IRGSP)"/>
        </authorList>
    </citation>
    <scope>NUCLEOTIDE SEQUENCE [LARGE SCALE GENOMIC DNA]</scope>
    <source>
        <strain>cv. Nipponbare</strain>
    </source>
</reference>
<reference key="4">
    <citation type="journal article" date="2008" name="Nucleic Acids Res.">
        <title>The rice annotation project database (RAP-DB): 2008 update.</title>
        <authorList>
            <consortium name="The rice annotation project (RAP)"/>
        </authorList>
    </citation>
    <scope>GENOME REANNOTATION</scope>
    <source>
        <strain>cv. Nipponbare</strain>
    </source>
</reference>
<reference key="5">
    <citation type="journal article" date="2013" name="Rice">
        <title>Improvement of the Oryza sativa Nipponbare reference genome using next generation sequence and optical map data.</title>
        <authorList>
            <person name="Kawahara Y."/>
            <person name="de la Bastide M."/>
            <person name="Hamilton J.P."/>
            <person name="Kanamori H."/>
            <person name="McCombie W.R."/>
            <person name="Ouyang S."/>
            <person name="Schwartz D.C."/>
            <person name="Tanaka T."/>
            <person name="Wu J."/>
            <person name="Zhou S."/>
            <person name="Childs K.L."/>
            <person name="Davidson R.M."/>
            <person name="Lin H."/>
            <person name="Quesada-Ocampo L."/>
            <person name="Vaillancourt B."/>
            <person name="Sakai H."/>
            <person name="Lee S.S."/>
            <person name="Kim J."/>
            <person name="Numa H."/>
            <person name="Itoh T."/>
            <person name="Buell C.R."/>
            <person name="Matsumoto T."/>
        </authorList>
    </citation>
    <scope>GENOME REANNOTATION</scope>
    <source>
        <strain>cv. Nipponbare</strain>
    </source>
</reference>
<reference key="6">
    <citation type="journal article" date="2005" name="PLoS Biol.">
        <title>The genomes of Oryza sativa: a history of duplications.</title>
        <authorList>
            <person name="Yu J."/>
            <person name="Wang J."/>
            <person name="Lin W."/>
            <person name="Li S."/>
            <person name="Li H."/>
            <person name="Zhou J."/>
            <person name="Ni P."/>
            <person name="Dong W."/>
            <person name="Hu S."/>
            <person name="Zeng C."/>
            <person name="Zhang J."/>
            <person name="Zhang Y."/>
            <person name="Li R."/>
            <person name="Xu Z."/>
            <person name="Li S."/>
            <person name="Li X."/>
            <person name="Zheng H."/>
            <person name="Cong L."/>
            <person name="Lin L."/>
            <person name="Yin J."/>
            <person name="Geng J."/>
            <person name="Li G."/>
            <person name="Shi J."/>
            <person name="Liu J."/>
            <person name="Lv H."/>
            <person name="Li J."/>
            <person name="Wang J."/>
            <person name="Deng Y."/>
            <person name="Ran L."/>
            <person name="Shi X."/>
            <person name="Wang X."/>
            <person name="Wu Q."/>
            <person name="Li C."/>
            <person name="Ren X."/>
            <person name="Wang J."/>
            <person name="Wang X."/>
            <person name="Li D."/>
            <person name="Liu D."/>
            <person name="Zhang X."/>
            <person name="Ji Z."/>
            <person name="Zhao W."/>
            <person name="Sun Y."/>
            <person name="Zhang Z."/>
            <person name="Bao J."/>
            <person name="Han Y."/>
            <person name="Dong L."/>
            <person name="Ji J."/>
            <person name="Chen P."/>
            <person name="Wu S."/>
            <person name="Liu J."/>
            <person name="Xiao Y."/>
            <person name="Bu D."/>
            <person name="Tan J."/>
            <person name="Yang L."/>
            <person name="Ye C."/>
            <person name="Zhang J."/>
            <person name="Xu J."/>
            <person name="Zhou Y."/>
            <person name="Yu Y."/>
            <person name="Zhang B."/>
            <person name="Zhuang S."/>
            <person name="Wei H."/>
            <person name="Liu B."/>
            <person name="Lei M."/>
            <person name="Yu H."/>
            <person name="Li Y."/>
            <person name="Xu H."/>
            <person name="Wei S."/>
            <person name="He X."/>
            <person name="Fang L."/>
            <person name="Zhang Z."/>
            <person name="Zhang Y."/>
            <person name="Huang X."/>
            <person name="Su Z."/>
            <person name="Tong W."/>
            <person name="Li J."/>
            <person name="Tong Z."/>
            <person name="Li S."/>
            <person name="Ye J."/>
            <person name="Wang L."/>
            <person name="Fang L."/>
            <person name="Lei T."/>
            <person name="Chen C.-S."/>
            <person name="Chen H.-C."/>
            <person name="Xu Z."/>
            <person name="Li H."/>
            <person name="Huang H."/>
            <person name="Zhang F."/>
            <person name="Xu H."/>
            <person name="Li N."/>
            <person name="Zhao C."/>
            <person name="Li S."/>
            <person name="Dong L."/>
            <person name="Huang Y."/>
            <person name="Li L."/>
            <person name="Xi Y."/>
            <person name="Qi Q."/>
            <person name="Li W."/>
            <person name="Zhang B."/>
            <person name="Hu W."/>
            <person name="Zhang Y."/>
            <person name="Tian X."/>
            <person name="Jiao Y."/>
            <person name="Liang X."/>
            <person name="Jin J."/>
            <person name="Gao L."/>
            <person name="Zheng W."/>
            <person name="Hao B."/>
            <person name="Liu S.-M."/>
            <person name="Wang W."/>
            <person name="Yuan L."/>
            <person name="Cao M."/>
            <person name="McDermott J."/>
            <person name="Samudrala R."/>
            <person name="Wang J."/>
            <person name="Wong G.K.-S."/>
            <person name="Yang H."/>
        </authorList>
    </citation>
    <scope>NUCLEOTIDE SEQUENCE [LARGE SCALE GENOMIC DNA]</scope>
    <source>
        <strain>cv. Nipponbare</strain>
    </source>
</reference>
<reference key="7">
    <citation type="journal article" date="2003" name="Science">
        <title>Collection, mapping, and annotation of over 28,000 cDNA clones from japonica rice.</title>
        <authorList>
            <consortium name="The rice full-length cDNA consortium"/>
        </authorList>
    </citation>
    <scope>NUCLEOTIDE SEQUENCE [LARGE SCALE MRNA]</scope>
    <source>
        <strain>cv. Nipponbare</strain>
    </source>
</reference>
<reference key="8">
    <citation type="journal article" date="1997" name="Plant Cell Physiol.">
        <title>Hormonal regulation of expression of two cysteine endopeptidase genes in rice seedlings.</title>
        <authorList>
            <person name="Shintani A."/>
            <person name="Kato H."/>
            <person name="Minamikawa T."/>
        </authorList>
    </citation>
    <scope>DEVELOPMENTAL STAGE</scope>
    <scope>INDUCTION BY GIBBERELLIN</scope>
</reference>
<dbReference type="EC" id="3.4.22.-" evidence="3"/>
<dbReference type="EMBL" id="AB004648">
    <property type="protein sequence ID" value="BAA83472.1"/>
    <property type="molecule type" value="Genomic_DNA"/>
</dbReference>
<dbReference type="EMBL" id="AC145324">
    <property type="protein sequence ID" value="AAX94791.1"/>
    <property type="molecule type" value="Genomic_DNA"/>
</dbReference>
<dbReference type="EMBL" id="AP008217">
    <property type="protein sequence ID" value="BAF27993.1"/>
    <property type="molecule type" value="Genomic_DNA"/>
</dbReference>
<dbReference type="EMBL" id="DP000010">
    <property type="protein sequence ID" value="ABA92412.1"/>
    <property type="molecule type" value="Genomic_DNA"/>
</dbReference>
<dbReference type="EMBL" id="DP000010">
    <property type="protein sequence ID" value="ABA92413.1"/>
    <property type="molecule type" value="Genomic_DNA"/>
</dbReference>
<dbReference type="EMBL" id="DP000010">
    <property type="protein sequence ID" value="ABA92414.1"/>
    <property type="molecule type" value="Genomic_DNA"/>
</dbReference>
<dbReference type="EMBL" id="AP014967">
    <property type="protein sequence ID" value="BAT13463.1"/>
    <property type="molecule type" value="Genomic_DNA"/>
</dbReference>
<dbReference type="EMBL" id="CM000148">
    <property type="protein sequence ID" value="EAZ18011.1"/>
    <property type="molecule type" value="Genomic_DNA"/>
</dbReference>
<dbReference type="EMBL" id="AK071495">
    <property type="protein sequence ID" value="BAG92522.1"/>
    <property type="molecule type" value="mRNA"/>
</dbReference>
<dbReference type="SMR" id="Q7GDU7"/>
<dbReference type="FunCoup" id="Q7GDU7">
    <property type="interactions" value="525"/>
</dbReference>
<dbReference type="STRING" id="39947.Q7GDU7"/>
<dbReference type="MEROPS" id="C01.168"/>
<dbReference type="PaxDb" id="39947-Q7GDU7"/>
<dbReference type="EnsemblPlants" id="Os11t0255300-01">
    <property type="protein sequence ID" value="Os11t0255300-01"/>
    <property type="gene ID" value="Os11g0255300"/>
</dbReference>
<dbReference type="GeneID" id="4350216"/>
<dbReference type="Gramene" id="Os11t0255300-01">
    <property type="protein sequence ID" value="Os11t0255300-01"/>
    <property type="gene ID" value="Os11g0255300"/>
</dbReference>
<dbReference type="KEGG" id="dosa:Os11g0255300"/>
<dbReference type="KEGG" id="osa:4350216"/>
<dbReference type="eggNOG" id="KOG1543">
    <property type="taxonomic scope" value="Eukaryota"/>
</dbReference>
<dbReference type="HOGENOM" id="CLU_012184_1_0_1"/>
<dbReference type="InParanoid" id="Q7GDU7"/>
<dbReference type="OMA" id="GKCDASK"/>
<dbReference type="OrthoDB" id="10253408at2759"/>
<dbReference type="Proteomes" id="UP000000763">
    <property type="component" value="Chromosome 11"/>
</dbReference>
<dbReference type="Proteomes" id="UP000007752">
    <property type="component" value="Chromosome 11"/>
</dbReference>
<dbReference type="Proteomes" id="UP000059680">
    <property type="component" value="Chromosome 11"/>
</dbReference>
<dbReference type="GO" id="GO:0005615">
    <property type="term" value="C:extracellular space"/>
    <property type="evidence" value="ECO:0000318"/>
    <property type="project" value="GO_Central"/>
</dbReference>
<dbReference type="GO" id="GO:0005764">
    <property type="term" value="C:lysosome"/>
    <property type="evidence" value="ECO:0000318"/>
    <property type="project" value="GO_Central"/>
</dbReference>
<dbReference type="GO" id="GO:0000326">
    <property type="term" value="C:protein storage vacuole"/>
    <property type="evidence" value="ECO:0007669"/>
    <property type="project" value="UniProtKB-SubCell"/>
</dbReference>
<dbReference type="GO" id="GO:0004197">
    <property type="term" value="F:cysteine-type endopeptidase activity"/>
    <property type="evidence" value="ECO:0000318"/>
    <property type="project" value="GO_Central"/>
</dbReference>
<dbReference type="GO" id="GO:0051603">
    <property type="term" value="P:proteolysis involved in protein catabolic process"/>
    <property type="evidence" value="ECO:0000318"/>
    <property type="project" value="GO_Central"/>
</dbReference>
<dbReference type="CDD" id="cd02248">
    <property type="entry name" value="Peptidase_C1A"/>
    <property type="match status" value="1"/>
</dbReference>
<dbReference type="FunFam" id="3.90.70.10:FF:000023">
    <property type="entry name" value="Senescence-specific cysteine protease SAG39"/>
    <property type="match status" value="1"/>
</dbReference>
<dbReference type="Gene3D" id="3.90.70.10">
    <property type="entry name" value="Cysteine proteinases"/>
    <property type="match status" value="1"/>
</dbReference>
<dbReference type="InterPro" id="IPR038765">
    <property type="entry name" value="Papain-like_cys_pep_sf"/>
</dbReference>
<dbReference type="InterPro" id="IPR025661">
    <property type="entry name" value="Pept_asp_AS"/>
</dbReference>
<dbReference type="InterPro" id="IPR000169">
    <property type="entry name" value="Pept_cys_AS"/>
</dbReference>
<dbReference type="InterPro" id="IPR025660">
    <property type="entry name" value="Pept_his_AS"/>
</dbReference>
<dbReference type="InterPro" id="IPR013128">
    <property type="entry name" value="Peptidase_C1A"/>
</dbReference>
<dbReference type="InterPro" id="IPR000668">
    <property type="entry name" value="Peptidase_C1A_C"/>
</dbReference>
<dbReference type="InterPro" id="IPR039417">
    <property type="entry name" value="Peptidase_C1A_papain-like"/>
</dbReference>
<dbReference type="InterPro" id="IPR013201">
    <property type="entry name" value="Prot_inhib_I29"/>
</dbReference>
<dbReference type="PANTHER" id="PTHR12411">
    <property type="entry name" value="CYSTEINE PROTEASE FAMILY C1-RELATED"/>
    <property type="match status" value="1"/>
</dbReference>
<dbReference type="Pfam" id="PF08246">
    <property type="entry name" value="Inhibitor_I29"/>
    <property type="match status" value="1"/>
</dbReference>
<dbReference type="Pfam" id="PF00112">
    <property type="entry name" value="Peptidase_C1"/>
    <property type="match status" value="1"/>
</dbReference>
<dbReference type="PRINTS" id="PR00705">
    <property type="entry name" value="PAPAIN"/>
</dbReference>
<dbReference type="SMART" id="SM00848">
    <property type="entry name" value="Inhibitor_I29"/>
    <property type="match status" value="1"/>
</dbReference>
<dbReference type="SMART" id="SM00645">
    <property type="entry name" value="Pept_C1"/>
    <property type="match status" value="1"/>
</dbReference>
<dbReference type="SUPFAM" id="SSF54001">
    <property type="entry name" value="Cysteine proteinases"/>
    <property type="match status" value="1"/>
</dbReference>
<dbReference type="PROSITE" id="PS00640">
    <property type="entry name" value="THIOL_PROTEASE_ASN"/>
    <property type="match status" value="1"/>
</dbReference>
<dbReference type="PROSITE" id="PS00139">
    <property type="entry name" value="THIOL_PROTEASE_CYS"/>
    <property type="match status" value="1"/>
</dbReference>
<dbReference type="PROSITE" id="PS00639">
    <property type="entry name" value="THIOL_PROTEASE_HIS"/>
    <property type="match status" value="1"/>
</dbReference>
<keyword id="KW-1015">Disulfide bond</keyword>
<keyword id="KW-0378">Hydrolase</keyword>
<keyword id="KW-0645">Protease</keyword>
<keyword id="KW-1185">Reference proteome</keyword>
<keyword id="KW-0732">Signal</keyword>
<keyword id="KW-0788">Thiol protease</keyword>
<keyword id="KW-0926">Vacuole</keyword>
<organism>
    <name type="scientific">Oryza sativa subsp. japonica</name>
    <name type="common">Rice</name>
    <dbReference type="NCBI Taxonomy" id="39947"/>
    <lineage>
        <taxon>Eukaryota</taxon>
        <taxon>Viridiplantae</taxon>
        <taxon>Streptophyta</taxon>
        <taxon>Embryophyta</taxon>
        <taxon>Tracheophyta</taxon>
        <taxon>Spermatophyta</taxon>
        <taxon>Magnoliopsida</taxon>
        <taxon>Liliopsida</taxon>
        <taxon>Poales</taxon>
        <taxon>Poaceae</taxon>
        <taxon>BOP clade</taxon>
        <taxon>Oryzoideae</taxon>
        <taxon>Oryzeae</taxon>
        <taxon>Oryzinae</taxon>
        <taxon>Oryza</taxon>
        <taxon>Oryza sativa</taxon>
    </lineage>
</organism>
<gene>
    <name evidence="9" type="primary">REPA</name>
    <name evidence="11" type="ordered locus">Os11g0255300</name>
    <name evidence="10" type="ordered locus">LOC_Os11g14900</name>
    <name evidence="12" type="ORF">OsJ_33558</name>
</gene>
<sequence length="378" mass="40933">MLRCFLVAAAAVALAAAAAAPARAIPFTESDLSSEESLRALYERWRSRYTVSRPAASGGVGNDDGEARRRFNVFVENARYIHEANRRGGRPFRLALNKFADMTTDEFRRTYAGSRARHHRSLSGGRGGEGGSFRYGGDDEDNLPPAVDWRERGAVTGIKDQGQCGSCWAFSTVAAVEGVNKIKTGRLVTLSEQELVDCDTGDNQGCDGGLMDYAFQFIKRNGGITTESNYPYRAEQGRCNKAKASSHDVTIDGYEDVPANDESALQKAVANQPVAVAVEASGQDFQFYSEGVFTGECGTDLDHGVAAVGYGITRDGTKYWIVKNSWGEDWGERGYIRMQRGVSSDSNGLCGIAMEASYPVKSGARNAAASNRVVKDEM</sequence>
<evidence type="ECO:0000250" key="1">
    <source>
        <dbReference type="UniProtKB" id="P07858"/>
    </source>
</evidence>
<evidence type="ECO:0000250" key="2">
    <source>
        <dbReference type="UniProtKB" id="P25250"/>
    </source>
</evidence>
<evidence type="ECO:0000250" key="3">
    <source>
        <dbReference type="UniProtKB" id="Q7F3A8"/>
    </source>
</evidence>
<evidence type="ECO:0000255" key="4"/>
<evidence type="ECO:0000255" key="5">
    <source>
        <dbReference type="PROSITE-ProRule" id="PRU10088"/>
    </source>
</evidence>
<evidence type="ECO:0000255" key="6">
    <source>
        <dbReference type="PROSITE-ProRule" id="PRU10089"/>
    </source>
</evidence>
<evidence type="ECO:0000255" key="7">
    <source>
        <dbReference type="PROSITE-ProRule" id="PRU10090"/>
    </source>
</evidence>
<evidence type="ECO:0000269" key="8">
    <source>
    </source>
</evidence>
<evidence type="ECO:0000303" key="9">
    <source>
    </source>
</evidence>
<evidence type="ECO:0000312" key="10">
    <source>
        <dbReference type="EMBL" id="ABA92412.1"/>
    </source>
</evidence>
<evidence type="ECO:0000312" key="11">
    <source>
        <dbReference type="EMBL" id="BAT13463.1"/>
    </source>
</evidence>
<evidence type="ECO:0000312" key="12">
    <source>
        <dbReference type="EMBL" id="EAZ18011.1"/>
    </source>
</evidence>
<comment type="function">
    <text evidence="3">Cysteine endopeptidase that digests in vitro both the acidic and basic subunits of glutelin, the major seed storage protein of rice.</text>
</comment>
<comment type="subcellular location">
    <subcellularLocation>
        <location evidence="3">Protein storage vacuole</location>
    </subcellularLocation>
</comment>
<comment type="developmental stage">
    <text evidence="8">Expressed in seedlings, from 6 to 21 days after seed imbibition.</text>
</comment>
<comment type="induction">
    <text evidence="8">Induced by treatment with gibberellin (GA3).</text>
</comment>
<comment type="similarity">
    <text evidence="5 6 7">Belongs to the peptidase C1 family.</text>
</comment>
<proteinExistence type="evidence at transcript level"/>